<evidence type="ECO:0000255" key="1">
    <source>
        <dbReference type="HAMAP-Rule" id="MF_00270"/>
    </source>
</evidence>
<evidence type="ECO:0000256" key="2">
    <source>
        <dbReference type="SAM" id="MobiDB-lite"/>
    </source>
</evidence>
<evidence type="ECO:0000305" key="3"/>
<keyword id="KW-1185">Reference proteome</keyword>
<keyword id="KW-0687">Ribonucleoprotein</keyword>
<keyword id="KW-0689">Ribosomal protein</keyword>
<keyword id="KW-0694">RNA-binding</keyword>
<keyword id="KW-0699">rRNA-binding</keyword>
<dbReference type="EMBL" id="CP000492">
    <property type="protein sequence ID" value="ABL66498.1"/>
    <property type="molecule type" value="Genomic_DNA"/>
</dbReference>
<dbReference type="RefSeq" id="WP_011746275.1">
    <property type="nucleotide sequence ID" value="NC_008639.1"/>
</dbReference>
<dbReference type="SMR" id="A1BJC1"/>
<dbReference type="STRING" id="290317.Cpha266_2510"/>
<dbReference type="KEGG" id="cph:Cpha266_2510"/>
<dbReference type="eggNOG" id="COG0238">
    <property type="taxonomic scope" value="Bacteria"/>
</dbReference>
<dbReference type="HOGENOM" id="CLU_148710_0_3_10"/>
<dbReference type="OrthoDB" id="9812008at2"/>
<dbReference type="Proteomes" id="UP000008701">
    <property type="component" value="Chromosome"/>
</dbReference>
<dbReference type="GO" id="GO:0022627">
    <property type="term" value="C:cytosolic small ribosomal subunit"/>
    <property type="evidence" value="ECO:0007669"/>
    <property type="project" value="TreeGrafter"/>
</dbReference>
<dbReference type="GO" id="GO:0070181">
    <property type="term" value="F:small ribosomal subunit rRNA binding"/>
    <property type="evidence" value="ECO:0007669"/>
    <property type="project" value="TreeGrafter"/>
</dbReference>
<dbReference type="GO" id="GO:0003735">
    <property type="term" value="F:structural constituent of ribosome"/>
    <property type="evidence" value="ECO:0007669"/>
    <property type="project" value="InterPro"/>
</dbReference>
<dbReference type="GO" id="GO:0006412">
    <property type="term" value="P:translation"/>
    <property type="evidence" value="ECO:0007669"/>
    <property type="project" value="UniProtKB-UniRule"/>
</dbReference>
<dbReference type="Gene3D" id="4.10.640.10">
    <property type="entry name" value="Ribosomal protein S18"/>
    <property type="match status" value="1"/>
</dbReference>
<dbReference type="HAMAP" id="MF_00270">
    <property type="entry name" value="Ribosomal_bS18"/>
    <property type="match status" value="1"/>
</dbReference>
<dbReference type="InterPro" id="IPR001648">
    <property type="entry name" value="Ribosomal_bS18"/>
</dbReference>
<dbReference type="InterPro" id="IPR036870">
    <property type="entry name" value="Ribosomal_bS18_sf"/>
</dbReference>
<dbReference type="NCBIfam" id="TIGR00165">
    <property type="entry name" value="S18"/>
    <property type="match status" value="1"/>
</dbReference>
<dbReference type="PANTHER" id="PTHR13479">
    <property type="entry name" value="30S RIBOSOMAL PROTEIN S18"/>
    <property type="match status" value="1"/>
</dbReference>
<dbReference type="PANTHER" id="PTHR13479:SF40">
    <property type="entry name" value="SMALL RIBOSOMAL SUBUNIT PROTEIN BS18M"/>
    <property type="match status" value="1"/>
</dbReference>
<dbReference type="Pfam" id="PF01084">
    <property type="entry name" value="Ribosomal_S18"/>
    <property type="match status" value="1"/>
</dbReference>
<dbReference type="PRINTS" id="PR00974">
    <property type="entry name" value="RIBOSOMALS18"/>
</dbReference>
<dbReference type="SUPFAM" id="SSF46911">
    <property type="entry name" value="Ribosomal protein S18"/>
    <property type="match status" value="1"/>
</dbReference>
<accession>A1BJC1</accession>
<comment type="function">
    <text evidence="1">Binds as a heterodimer with protein bS6 to the central domain of the 16S rRNA, where it helps stabilize the platform of the 30S subunit.</text>
</comment>
<comment type="subunit">
    <text evidence="1">Part of the 30S ribosomal subunit. Forms a tight heterodimer with protein bS6.</text>
</comment>
<comment type="similarity">
    <text evidence="1">Belongs to the bacterial ribosomal protein bS18 family.</text>
</comment>
<protein>
    <recommendedName>
        <fullName evidence="1">Small ribosomal subunit protein bS18</fullName>
    </recommendedName>
    <alternativeName>
        <fullName evidence="3">30S ribosomal protein S18</fullName>
    </alternativeName>
</protein>
<feature type="chain" id="PRO_0000345451" description="Small ribosomal subunit protein bS18">
    <location>
        <begin position="1"/>
        <end position="87"/>
    </location>
</feature>
<feature type="region of interest" description="Disordered" evidence="2">
    <location>
        <begin position="1"/>
        <end position="21"/>
    </location>
</feature>
<proteinExistence type="inferred from homology"/>
<name>RS18_CHLPD</name>
<sequence>MRHKPTPPKGNKSLGNALASKKKVSKNQVVFFDYRDERKLKRFINDQGKIIPRRITGLSAKEQNLLTHSVKWARFLAVIPYVTDEYK</sequence>
<organism>
    <name type="scientific">Chlorobium phaeobacteroides (strain DSM 266 / SMG 266 / 2430)</name>
    <dbReference type="NCBI Taxonomy" id="290317"/>
    <lineage>
        <taxon>Bacteria</taxon>
        <taxon>Pseudomonadati</taxon>
        <taxon>Chlorobiota</taxon>
        <taxon>Chlorobiia</taxon>
        <taxon>Chlorobiales</taxon>
        <taxon>Chlorobiaceae</taxon>
        <taxon>Chlorobium/Pelodictyon group</taxon>
        <taxon>Chlorobium</taxon>
    </lineage>
</organism>
<gene>
    <name evidence="1" type="primary">rpsR</name>
    <name type="ordered locus">Cpha266_2510</name>
</gene>
<reference key="1">
    <citation type="submission" date="2006-12" db="EMBL/GenBank/DDBJ databases">
        <title>Complete sequence of Chlorobium phaeobacteroides DSM 266.</title>
        <authorList>
            <consortium name="US DOE Joint Genome Institute"/>
            <person name="Copeland A."/>
            <person name="Lucas S."/>
            <person name="Lapidus A."/>
            <person name="Barry K."/>
            <person name="Detter J.C."/>
            <person name="Glavina del Rio T."/>
            <person name="Hammon N."/>
            <person name="Israni S."/>
            <person name="Pitluck S."/>
            <person name="Goltsman E."/>
            <person name="Schmutz J."/>
            <person name="Larimer F."/>
            <person name="Land M."/>
            <person name="Hauser L."/>
            <person name="Mikhailova N."/>
            <person name="Li T."/>
            <person name="Overmann J."/>
            <person name="Bryant D.A."/>
            <person name="Richardson P."/>
        </authorList>
    </citation>
    <scope>NUCLEOTIDE SEQUENCE [LARGE SCALE GENOMIC DNA]</scope>
    <source>
        <strain>DSM 266 / SMG 266 / 2430</strain>
    </source>
</reference>